<keyword id="KW-0004">4Fe-4S</keyword>
<keyword id="KW-0408">Iron</keyword>
<keyword id="KW-0411">Iron-sulfur</keyword>
<keyword id="KW-0479">Metal-binding</keyword>
<organism>
    <name type="scientific">Edwardsiella ictaluri (strain 93-146)</name>
    <dbReference type="NCBI Taxonomy" id="634503"/>
    <lineage>
        <taxon>Bacteria</taxon>
        <taxon>Pseudomonadati</taxon>
        <taxon>Pseudomonadota</taxon>
        <taxon>Gammaproteobacteria</taxon>
        <taxon>Enterobacterales</taxon>
        <taxon>Hafniaceae</taxon>
        <taxon>Edwardsiella</taxon>
    </lineage>
</organism>
<accession>C5BGT5</accession>
<feature type="chain" id="PRO_1000215814" description="Fe/S biogenesis protein NfuA">
    <location>
        <begin position="1"/>
        <end position="191"/>
    </location>
</feature>
<feature type="binding site" evidence="1">
    <location>
        <position position="149"/>
    </location>
    <ligand>
        <name>[4Fe-4S] cluster</name>
        <dbReference type="ChEBI" id="CHEBI:49883"/>
    </ligand>
</feature>
<feature type="binding site" evidence="1">
    <location>
        <position position="152"/>
    </location>
    <ligand>
        <name>[4Fe-4S] cluster</name>
        <dbReference type="ChEBI" id="CHEBI:49883"/>
    </ligand>
</feature>
<proteinExistence type="inferred from homology"/>
<dbReference type="EMBL" id="CP001600">
    <property type="protein sequence ID" value="ACR70782.1"/>
    <property type="molecule type" value="Genomic_DNA"/>
</dbReference>
<dbReference type="RefSeq" id="WP_015872822.1">
    <property type="nucleotide sequence ID" value="NZ_CP169062.1"/>
</dbReference>
<dbReference type="SMR" id="C5BGT5"/>
<dbReference type="STRING" id="67780.B6E78_09920"/>
<dbReference type="GeneID" id="69540494"/>
<dbReference type="KEGG" id="eic:NT01EI_3654"/>
<dbReference type="PATRIC" id="fig|634503.3.peg.3258"/>
<dbReference type="HOGENOM" id="CLU_094569_0_0_6"/>
<dbReference type="OrthoDB" id="9785450at2"/>
<dbReference type="Proteomes" id="UP000001485">
    <property type="component" value="Chromosome"/>
</dbReference>
<dbReference type="GO" id="GO:0051539">
    <property type="term" value="F:4 iron, 4 sulfur cluster binding"/>
    <property type="evidence" value="ECO:0007669"/>
    <property type="project" value="UniProtKB-UniRule"/>
</dbReference>
<dbReference type="GO" id="GO:0005506">
    <property type="term" value="F:iron ion binding"/>
    <property type="evidence" value="ECO:0007669"/>
    <property type="project" value="InterPro"/>
</dbReference>
<dbReference type="GO" id="GO:0016226">
    <property type="term" value="P:iron-sulfur cluster assembly"/>
    <property type="evidence" value="ECO:0007669"/>
    <property type="project" value="UniProtKB-UniRule"/>
</dbReference>
<dbReference type="GO" id="GO:0051604">
    <property type="term" value="P:protein maturation"/>
    <property type="evidence" value="ECO:0007669"/>
    <property type="project" value="UniProtKB-UniRule"/>
</dbReference>
<dbReference type="FunFam" id="3.30.300.130:FF:000002">
    <property type="entry name" value="Fe/S biogenesis protein NfuA"/>
    <property type="match status" value="1"/>
</dbReference>
<dbReference type="Gene3D" id="3.30.300.130">
    <property type="entry name" value="Fe-S cluster assembly (FSCA)"/>
    <property type="match status" value="1"/>
</dbReference>
<dbReference type="Gene3D" id="2.60.300.12">
    <property type="entry name" value="HesB-like domain"/>
    <property type="match status" value="1"/>
</dbReference>
<dbReference type="HAMAP" id="MF_01637">
    <property type="entry name" value="Fe_S_biogen_NfuA"/>
    <property type="match status" value="1"/>
</dbReference>
<dbReference type="InterPro" id="IPR017726">
    <property type="entry name" value="Fe/S_biogenesis_protein_NfuA"/>
</dbReference>
<dbReference type="InterPro" id="IPR000361">
    <property type="entry name" value="FeS_biogenesis"/>
</dbReference>
<dbReference type="InterPro" id="IPR034904">
    <property type="entry name" value="FSCA_dom_sf"/>
</dbReference>
<dbReference type="InterPro" id="IPR035903">
    <property type="entry name" value="HesB-like_dom_sf"/>
</dbReference>
<dbReference type="InterPro" id="IPR001075">
    <property type="entry name" value="NIF_FeS_clus_asmbl_NifU_C"/>
</dbReference>
<dbReference type="NCBIfam" id="NF008392">
    <property type="entry name" value="PRK11190.1"/>
    <property type="match status" value="1"/>
</dbReference>
<dbReference type="NCBIfam" id="TIGR03341">
    <property type="entry name" value="YhgI_GntY"/>
    <property type="match status" value="1"/>
</dbReference>
<dbReference type="PANTHER" id="PTHR11178:SF51">
    <property type="entry name" value="FE_S BIOGENESIS PROTEIN NFUA"/>
    <property type="match status" value="1"/>
</dbReference>
<dbReference type="PANTHER" id="PTHR11178">
    <property type="entry name" value="IRON-SULFUR CLUSTER SCAFFOLD PROTEIN NFU-RELATED"/>
    <property type="match status" value="1"/>
</dbReference>
<dbReference type="Pfam" id="PF01521">
    <property type="entry name" value="Fe-S_biosyn"/>
    <property type="match status" value="1"/>
</dbReference>
<dbReference type="Pfam" id="PF01106">
    <property type="entry name" value="NifU"/>
    <property type="match status" value="1"/>
</dbReference>
<dbReference type="SUPFAM" id="SSF117916">
    <property type="entry name" value="Fe-S cluster assembly (FSCA) domain-like"/>
    <property type="match status" value="1"/>
</dbReference>
<dbReference type="SUPFAM" id="SSF89360">
    <property type="entry name" value="HesB-like domain"/>
    <property type="match status" value="1"/>
</dbReference>
<name>NFUA_EDWI9</name>
<reference key="1">
    <citation type="submission" date="2009-03" db="EMBL/GenBank/DDBJ databases">
        <title>Complete genome sequence of Edwardsiella ictaluri 93-146.</title>
        <authorList>
            <person name="Williams M.L."/>
            <person name="Gillaspy A.F."/>
            <person name="Dyer D.W."/>
            <person name="Thune R.L."/>
            <person name="Waldbieser G.C."/>
            <person name="Schuster S.C."/>
            <person name="Gipson J."/>
            <person name="Zaitshik J."/>
            <person name="Landry C."/>
            <person name="Lawrence M.L."/>
        </authorList>
    </citation>
    <scope>NUCLEOTIDE SEQUENCE [LARGE SCALE GENOMIC DNA]</scope>
    <source>
        <strain>93-146</strain>
    </source>
</reference>
<comment type="function">
    <text evidence="1">Involved in iron-sulfur cluster biogenesis. Binds a 4Fe-4S cluster, can transfer this cluster to apoproteins, and thereby intervenes in the maturation of Fe/S proteins. Could also act as a scaffold/chaperone for damaged Fe/S proteins.</text>
</comment>
<comment type="cofactor">
    <cofactor evidence="1">
        <name>[4Fe-4S] cluster</name>
        <dbReference type="ChEBI" id="CHEBI:49883"/>
    </cofactor>
    <text evidence="1">Binds 1 [4Fe-4S] cluster per subunit. The cluster is presumably bound at the interface of two monomers.</text>
</comment>
<comment type="subunit">
    <text evidence="1">Homodimer.</text>
</comment>
<comment type="similarity">
    <text evidence="1">Belongs to the NfuA family.</text>
</comment>
<sequence length="191" mass="21205">MIRITEAAQEHFAKLLANQEPGTQIRVFVINPGTPNAECGVSYCPPDAVEANDRKLDFEQLSAYVDEISAPFLDDAEIDFVTDQLGSQLTLKAPNAKMRKVADDAPLIERVEYILQSQINPQLAGHGGRVSLMEITDEGYAILQFGGGCNGCSMVDYTLKEGIEKELLQRFPELKGVRDLTEHQRGDHSYY</sequence>
<evidence type="ECO:0000255" key="1">
    <source>
        <dbReference type="HAMAP-Rule" id="MF_01637"/>
    </source>
</evidence>
<protein>
    <recommendedName>
        <fullName evidence="1">Fe/S biogenesis protein NfuA</fullName>
    </recommendedName>
</protein>
<gene>
    <name evidence="1" type="primary">nfuA</name>
    <name type="ordered locus">NT01EI_3654</name>
</gene>